<reference key="1">
    <citation type="journal article" date="2005" name="Proc. Natl. Acad. Sci. U.S.A.">
        <title>The psychrophilic lifestyle as revealed by the genome sequence of Colwellia psychrerythraea 34H through genomic and proteomic analyses.</title>
        <authorList>
            <person name="Methe B.A."/>
            <person name="Nelson K.E."/>
            <person name="Deming J.W."/>
            <person name="Momen B."/>
            <person name="Melamud E."/>
            <person name="Zhang X."/>
            <person name="Moult J."/>
            <person name="Madupu R."/>
            <person name="Nelson W.C."/>
            <person name="Dodson R.J."/>
            <person name="Brinkac L.M."/>
            <person name="Daugherty S.C."/>
            <person name="Durkin A.S."/>
            <person name="DeBoy R.T."/>
            <person name="Kolonay J.F."/>
            <person name="Sullivan S.A."/>
            <person name="Zhou L."/>
            <person name="Davidsen T.M."/>
            <person name="Wu M."/>
            <person name="Huston A.L."/>
            <person name="Lewis M."/>
            <person name="Weaver B."/>
            <person name="Weidman J.F."/>
            <person name="Khouri H."/>
            <person name="Utterback T.R."/>
            <person name="Feldblyum T.V."/>
            <person name="Fraser C.M."/>
        </authorList>
    </citation>
    <scope>NUCLEOTIDE SEQUENCE [LARGE SCALE GENOMIC DNA]</scope>
    <source>
        <strain>34H / ATCC BAA-681</strain>
    </source>
</reference>
<comment type="function">
    <text evidence="1">Essential cell division protein that stabilizes the FtsZ protofilaments by cross-linking them and that serves as a cytoplasmic membrane anchor for the Z ring. Also required for the recruitment to the septal ring of downstream cell division proteins.</text>
</comment>
<comment type="subunit">
    <text evidence="1">Interacts with FtsZ via their C-terminal domains.</text>
</comment>
<comment type="subcellular location">
    <subcellularLocation>
        <location evidence="1">Cell inner membrane</location>
        <topology evidence="1">Single-pass type I membrane protein</topology>
    </subcellularLocation>
    <text evidence="1">Localizes to the Z ring in an FtsZ-dependent manner.</text>
</comment>
<comment type="similarity">
    <text evidence="1">Belongs to the ZipA family.</text>
</comment>
<accession>Q47YH9</accession>
<proteinExistence type="inferred from homology"/>
<organism>
    <name type="scientific">Colwellia psychrerythraea (strain 34H / ATCC BAA-681)</name>
    <name type="common">Vibrio psychroerythus</name>
    <dbReference type="NCBI Taxonomy" id="167879"/>
    <lineage>
        <taxon>Bacteria</taxon>
        <taxon>Pseudomonadati</taxon>
        <taxon>Pseudomonadota</taxon>
        <taxon>Gammaproteobacteria</taxon>
        <taxon>Alteromonadales</taxon>
        <taxon>Colwelliaceae</taxon>
        <taxon>Colwellia</taxon>
    </lineage>
</organism>
<dbReference type="EMBL" id="CP000083">
    <property type="protein sequence ID" value="AAZ26162.1"/>
    <property type="molecule type" value="Genomic_DNA"/>
</dbReference>
<dbReference type="RefSeq" id="WP_011044227.1">
    <property type="nucleotide sequence ID" value="NC_003910.7"/>
</dbReference>
<dbReference type="SMR" id="Q47YH9"/>
<dbReference type="STRING" id="167879.CPS_3467"/>
<dbReference type="KEGG" id="cps:CPS_3467"/>
<dbReference type="HOGENOM" id="CLU_581190_0_0_6"/>
<dbReference type="Proteomes" id="UP000000547">
    <property type="component" value="Chromosome"/>
</dbReference>
<dbReference type="GO" id="GO:0032153">
    <property type="term" value="C:cell division site"/>
    <property type="evidence" value="ECO:0007669"/>
    <property type="project" value="UniProtKB-UniRule"/>
</dbReference>
<dbReference type="GO" id="GO:0005886">
    <property type="term" value="C:plasma membrane"/>
    <property type="evidence" value="ECO:0007669"/>
    <property type="project" value="UniProtKB-SubCell"/>
</dbReference>
<dbReference type="GO" id="GO:0000917">
    <property type="term" value="P:division septum assembly"/>
    <property type="evidence" value="ECO:0007669"/>
    <property type="project" value="TreeGrafter"/>
</dbReference>
<dbReference type="GO" id="GO:0043093">
    <property type="term" value="P:FtsZ-dependent cytokinesis"/>
    <property type="evidence" value="ECO:0007669"/>
    <property type="project" value="UniProtKB-UniRule"/>
</dbReference>
<dbReference type="Gene3D" id="3.30.1400.10">
    <property type="entry name" value="ZipA, C-terminal FtsZ-binding domain"/>
    <property type="match status" value="1"/>
</dbReference>
<dbReference type="HAMAP" id="MF_00509">
    <property type="entry name" value="ZipA"/>
    <property type="match status" value="1"/>
</dbReference>
<dbReference type="InterPro" id="IPR011919">
    <property type="entry name" value="Cell_div_ZipA"/>
</dbReference>
<dbReference type="InterPro" id="IPR007449">
    <property type="entry name" value="ZipA_FtsZ-bd_C"/>
</dbReference>
<dbReference type="InterPro" id="IPR036765">
    <property type="entry name" value="ZipA_FtsZ-bd_C_sf"/>
</dbReference>
<dbReference type="NCBIfam" id="TIGR02205">
    <property type="entry name" value="septum_zipA"/>
    <property type="match status" value="1"/>
</dbReference>
<dbReference type="PANTHER" id="PTHR38685">
    <property type="entry name" value="CELL DIVISION PROTEIN ZIPA"/>
    <property type="match status" value="1"/>
</dbReference>
<dbReference type="PANTHER" id="PTHR38685:SF1">
    <property type="entry name" value="CELL DIVISION PROTEIN ZIPA"/>
    <property type="match status" value="1"/>
</dbReference>
<dbReference type="Pfam" id="PF04354">
    <property type="entry name" value="ZipA_C"/>
    <property type="match status" value="1"/>
</dbReference>
<dbReference type="SMART" id="SM00771">
    <property type="entry name" value="ZipA_C"/>
    <property type="match status" value="1"/>
</dbReference>
<dbReference type="SUPFAM" id="SSF64383">
    <property type="entry name" value="Cell-division protein ZipA, C-terminal domain"/>
    <property type="match status" value="1"/>
</dbReference>
<gene>
    <name evidence="1" type="primary">zipA</name>
    <name type="ordered locus">CPS_3467</name>
</gene>
<name>ZIPA_COLP3</name>
<sequence length="380" mass="42602">MEDNFRNVLIILSAIVITAIFIHGLWTLRKQKNPYKLKTSKDKADPITRDFDRKGFDQDGVGQVKVKPSAENDKINLENEAVTEHFITEGIQLPDDLSKSQIIIKNDVLGDLAGQTSKAKQEELDNNSIQELDSSLEDDWFKEDNSGQFSKGELGDELTPAPAVEKVKKKPTKPKAVHIEPLYEQPVTQAKPARTPINKVSKTPSKATLKRDQIEIDFDNQMSEQAAAPKKIKTQLEPQVIILSVVMPANQQMLGAALLPSLLTLGLKYGEMNIFHRHEDNAGKGKVTFSLANIMNPGSFDLDNMENFATRGVSLFMTLPNAGDPFSVFEQMLNAAKQLAQEFNAQVLDDKRNVMTKQTEQHYLSKIREFDRKSRIALVE</sequence>
<keyword id="KW-0131">Cell cycle</keyword>
<keyword id="KW-0132">Cell division</keyword>
<keyword id="KW-0997">Cell inner membrane</keyword>
<keyword id="KW-1003">Cell membrane</keyword>
<keyword id="KW-0472">Membrane</keyword>
<keyword id="KW-0812">Transmembrane</keyword>
<keyword id="KW-1133">Transmembrane helix</keyword>
<feature type="chain" id="PRO_0000258587" description="Cell division protein ZipA">
    <location>
        <begin position="1"/>
        <end position="380"/>
    </location>
</feature>
<feature type="topological domain" description="Periplasmic" evidence="1">
    <location>
        <begin position="1"/>
        <end position="7"/>
    </location>
</feature>
<feature type="transmembrane region" description="Helical" evidence="1">
    <location>
        <begin position="8"/>
        <end position="28"/>
    </location>
</feature>
<feature type="topological domain" description="Cytoplasmic" evidence="1">
    <location>
        <begin position="29"/>
        <end position="380"/>
    </location>
</feature>
<protein>
    <recommendedName>
        <fullName evidence="1">Cell division protein ZipA</fullName>
    </recommendedName>
</protein>
<evidence type="ECO:0000255" key="1">
    <source>
        <dbReference type="HAMAP-Rule" id="MF_00509"/>
    </source>
</evidence>